<evidence type="ECO:0000255" key="1">
    <source>
        <dbReference type="PROSITE-ProRule" id="PRU00798"/>
    </source>
</evidence>
<organism>
    <name type="scientific">Pavo muticus</name>
    <name type="common">Green peafowl</name>
    <dbReference type="NCBI Taxonomy" id="9050"/>
    <lineage>
        <taxon>Eukaryota</taxon>
        <taxon>Metazoa</taxon>
        <taxon>Chordata</taxon>
        <taxon>Craniata</taxon>
        <taxon>Vertebrata</taxon>
        <taxon>Euteleostomi</taxon>
        <taxon>Archelosauria</taxon>
        <taxon>Archosauria</taxon>
        <taxon>Dinosauria</taxon>
        <taxon>Saurischia</taxon>
        <taxon>Theropoda</taxon>
        <taxon>Coelurosauria</taxon>
        <taxon>Aves</taxon>
        <taxon>Neognathae</taxon>
        <taxon>Galloanserae</taxon>
        <taxon>Galliformes</taxon>
        <taxon>Phasianidae</taxon>
        <taxon>Phasianinae</taxon>
        <taxon>Pavo</taxon>
    </lineage>
</organism>
<proteinExistence type="evidence at protein level"/>
<sequence length="54" mass="5811">AVSVDCSEYPKPACTLEHRPLCGSDNKTYGNKCNFCNAVVESNGTLTLSHFGKC</sequence>
<comment type="subcellular location">
    <subcellularLocation>
        <location>Secreted</location>
    </subcellularLocation>
</comment>
<comment type="domain">
    <text>Avian ovomucoid consists of three homologous, tandem Kazal family inhibitory domains.</text>
</comment>
<protein>
    <recommendedName>
        <fullName>Ovomucoid</fullName>
    </recommendedName>
</protein>
<reference key="1">
    <citation type="journal article" date="1990" name="J. Protein Chem.">
        <title>Amino acid sequences of ovomucoid third domain from 25 additional species of birds.</title>
        <authorList>
            <person name="Laskowski M. Jr."/>
            <person name="Apostol I."/>
            <person name="Ardelt W."/>
            <person name="Cook J."/>
            <person name="Giletto A."/>
            <person name="Kelly C.A."/>
            <person name="Lu W."/>
            <person name="Park S.J."/>
            <person name="Qasim M.A."/>
            <person name="Whatley H.E."/>
            <person name="Wieczorek A."/>
            <person name="Wynn R."/>
        </authorList>
    </citation>
    <scope>PROTEIN SEQUENCE</scope>
</reference>
<feature type="chain" id="PRO_0000073157" description="Ovomucoid">
    <location>
        <begin position="1" status="less than"/>
        <end position="54" status="greater than"/>
    </location>
</feature>
<feature type="domain" description="Kazal-like" evidence="1">
    <location>
        <begin position="4"/>
        <end position="54"/>
    </location>
</feature>
<feature type="site" description="Reactive bond 3">
    <location>
        <begin position="16"/>
        <end position="17"/>
    </location>
</feature>
<feature type="glycosylation site" description="N-linked (GlcNAc...) asparagine">
    <location>
        <position position="43"/>
    </location>
</feature>
<feature type="disulfide bond">
    <location>
        <begin position="6"/>
        <end position="36"/>
    </location>
</feature>
<feature type="disulfide bond">
    <location>
        <begin position="14"/>
        <end position="33"/>
    </location>
</feature>
<feature type="disulfide bond">
    <location>
        <begin position="22"/>
        <end position="54"/>
    </location>
</feature>
<feature type="non-terminal residue">
    <location>
        <position position="1"/>
    </location>
</feature>
<feature type="non-terminal residue">
    <location>
        <position position="54"/>
    </location>
</feature>
<keyword id="KW-0903">Direct protein sequencing</keyword>
<keyword id="KW-1015">Disulfide bond</keyword>
<keyword id="KW-0325">Glycoprotein</keyword>
<keyword id="KW-0646">Protease inhibitor</keyword>
<keyword id="KW-0677">Repeat</keyword>
<keyword id="KW-0964">Secreted</keyword>
<keyword id="KW-0722">Serine protease inhibitor</keyword>
<name>IOVO_PAVMU</name>
<accession>P52263</accession>
<dbReference type="PIR" id="A61494">
    <property type="entry name" value="A61494"/>
</dbReference>
<dbReference type="BMRB" id="P52263"/>
<dbReference type="SMR" id="P52263"/>
<dbReference type="GO" id="GO:0005615">
    <property type="term" value="C:extracellular space"/>
    <property type="evidence" value="ECO:0007669"/>
    <property type="project" value="UniProtKB-ARBA"/>
</dbReference>
<dbReference type="GO" id="GO:0004867">
    <property type="term" value="F:serine-type endopeptidase inhibitor activity"/>
    <property type="evidence" value="ECO:0007669"/>
    <property type="project" value="UniProtKB-KW"/>
</dbReference>
<dbReference type="CDD" id="cd00104">
    <property type="entry name" value="KAZAL_FS"/>
    <property type="match status" value="1"/>
</dbReference>
<dbReference type="FunFam" id="3.30.60.30:FF:000037">
    <property type="entry name" value="Ovomucoid"/>
    <property type="match status" value="1"/>
</dbReference>
<dbReference type="Gene3D" id="3.30.60.30">
    <property type="match status" value="1"/>
</dbReference>
<dbReference type="InterPro" id="IPR051597">
    <property type="entry name" value="Bifunctional_prot_inhibitor"/>
</dbReference>
<dbReference type="InterPro" id="IPR002350">
    <property type="entry name" value="Kazal_dom"/>
</dbReference>
<dbReference type="InterPro" id="IPR036058">
    <property type="entry name" value="Kazal_dom_sf"/>
</dbReference>
<dbReference type="InterPro" id="IPR001239">
    <property type="entry name" value="Prot_inh_Kazal-m"/>
</dbReference>
<dbReference type="PANTHER" id="PTHR47729:SF1">
    <property type="entry name" value="OVOMUCOID-LIKE-RELATED"/>
    <property type="match status" value="1"/>
</dbReference>
<dbReference type="PANTHER" id="PTHR47729">
    <property type="entry name" value="SERINE PEPTIDASE INHIBITOR, KAZAL TYPE 2, TANDEM DUPLICATE 1-RELATED"/>
    <property type="match status" value="1"/>
</dbReference>
<dbReference type="Pfam" id="PF00050">
    <property type="entry name" value="Kazal_1"/>
    <property type="match status" value="1"/>
</dbReference>
<dbReference type="PRINTS" id="PR00290">
    <property type="entry name" value="KAZALINHBTR"/>
</dbReference>
<dbReference type="SMART" id="SM00280">
    <property type="entry name" value="KAZAL"/>
    <property type="match status" value="1"/>
</dbReference>
<dbReference type="SUPFAM" id="SSF100895">
    <property type="entry name" value="Kazal-type serine protease inhibitors"/>
    <property type="match status" value="1"/>
</dbReference>
<dbReference type="PROSITE" id="PS00282">
    <property type="entry name" value="KAZAL_1"/>
    <property type="match status" value="1"/>
</dbReference>
<dbReference type="PROSITE" id="PS51465">
    <property type="entry name" value="KAZAL_2"/>
    <property type="match status" value="1"/>
</dbReference>